<name>RL14_CHLFF</name>
<accession>Q252W3</accession>
<dbReference type="EMBL" id="AP006861">
    <property type="protein sequence ID" value="BAE81675.1"/>
    <property type="molecule type" value="Genomic_DNA"/>
</dbReference>
<dbReference type="RefSeq" id="WP_011006076.1">
    <property type="nucleotide sequence ID" value="NC_007899.1"/>
</dbReference>
<dbReference type="SMR" id="Q252W3"/>
<dbReference type="STRING" id="264202.CF0903"/>
<dbReference type="KEGG" id="cfe:CF0903"/>
<dbReference type="eggNOG" id="COG0093">
    <property type="taxonomic scope" value="Bacteria"/>
</dbReference>
<dbReference type="HOGENOM" id="CLU_095071_2_1_0"/>
<dbReference type="OrthoDB" id="9806379at2"/>
<dbReference type="Proteomes" id="UP000001260">
    <property type="component" value="Chromosome"/>
</dbReference>
<dbReference type="GO" id="GO:0022625">
    <property type="term" value="C:cytosolic large ribosomal subunit"/>
    <property type="evidence" value="ECO:0007669"/>
    <property type="project" value="TreeGrafter"/>
</dbReference>
<dbReference type="GO" id="GO:0070180">
    <property type="term" value="F:large ribosomal subunit rRNA binding"/>
    <property type="evidence" value="ECO:0007669"/>
    <property type="project" value="TreeGrafter"/>
</dbReference>
<dbReference type="GO" id="GO:0003735">
    <property type="term" value="F:structural constituent of ribosome"/>
    <property type="evidence" value="ECO:0007669"/>
    <property type="project" value="InterPro"/>
</dbReference>
<dbReference type="GO" id="GO:0006412">
    <property type="term" value="P:translation"/>
    <property type="evidence" value="ECO:0007669"/>
    <property type="project" value="UniProtKB-UniRule"/>
</dbReference>
<dbReference type="CDD" id="cd00337">
    <property type="entry name" value="Ribosomal_uL14"/>
    <property type="match status" value="1"/>
</dbReference>
<dbReference type="FunFam" id="2.40.150.20:FF:000001">
    <property type="entry name" value="50S ribosomal protein L14"/>
    <property type="match status" value="1"/>
</dbReference>
<dbReference type="Gene3D" id="2.40.150.20">
    <property type="entry name" value="Ribosomal protein L14"/>
    <property type="match status" value="1"/>
</dbReference>
<dbReference type="HAMAP" id="MF_01367">
    <property type="entry name" value="Ribosomal_uL14"/>
    <property type="match status" value="1"/>
</dbReference>
<dbReference type="InterPro" id="IPR000218">
    <property type="entry name" value="Ribosomal_uL14"/>
</dbReference>
<dbReference type="InterPro" id="IPR005745">
    <property type="entry name" value="Ribosomal_uL14_bac-type"/>
</dbReference>
<dbReference type="InterPro" id="IPR019972">
    <property type="entry name" value="Ribosomal_uL14_CS"/>
</dbReference>
<dbReference type="InterPro" id="IPR036853">
    <property type="entry name" value="Ribosomal_uL14_sf"/>
</dbReference>
<dbReference type="NCBIfam" id="TIGR01067">
    <property type="entry name" value="rplN_bact"/>
    <property type="match status" value="1"/>
</dbReference>
<dbReference type="PANTHER" id="PTHR11761">
    <property type="entry name" value="50S/60S RIBOSOMAL PROTEIN L14/L23"/>
    <property type="match status" value="1"/>
</dbReference>
<dbReference type="PANTHER" id="PTHR11761:SF3">
    <property type="entry name" value="LARGE RIBOSOMAL SUBUNIT PROTEIN UL14M"/>
    <property type="match status" value="1"/>
</dbReference>
<dbReference type="Pfam" id="PF00238">
    <property type="entry name" value="Ribosomal_L14"/>
    <property type="match status" value="1"/>
</dbReference>
<dbReference type="SMART" id="SM01374">
    <property type="entry name" value="Ribosomal_L14"/>
    <property type="match status" value="1"/>
</dbReference>
<dbReference type="SUPFAM" id="SSF50193">
    <property type="entry name" value="Ribosomal protein L14"/>
    <property type="match status" value="1"/>
</dbReference>
<dbReference type="PROSITE" id="PS00049">
    <property type="entry name" value="RIBOSOMAL_L14"/>
    <property type="match status" value="1"/>
</dbReference>
<feature type="chain" id="PRO_1000055551" description="Large ribosomal subunit protein uL14">
    <location>
        <begin position="1"/>
        <end position="122"/>
    </location>
</feature>
<comment type="function">
    <text evidence="1">Binds to 23S rRNA. Forms part of two intersubunit bridges in the 70S ribosome.</text>
</comment>
<comment type="subunit">
    <text evidence="1">Part of the 50S ribosomal subunit. Forms a cluster with proteins L3 and L19. In the 70S ribosome, L14 and L19 interact and together make contacts with the 16S rRNA in bridges B5 and B8.</text>
</comment>
<comment type="similarity">
    <text evidence="1">Belongs to the universal ribosomal protein uL14 family.</text>
</comment>
<organism>
    <name type="scientific">Chlamydia felis (strain Fe/C-56)</name>
    <name type="common">Chlamydophila felis</name>
    <dbReference type="NCBI Taxonomy" id="264202"/>
    <lineage>
        <taxon>Bacteria</taxon>
        <taxon>Pseudomonadati</taxon>
        <taxon>Chlamydiota</taxon>
        <taxon>Chlamydiia</taxon>
        <taxon>Chlamydiales</taxon>
        <taxon>Chlamydiaceae</taxon>
        <taxon>Chlamydia/Chlamydophila group</taxon>
        <taxon>Chlamydia</taxon>
    </lineage>
</organism>
<protein>
    <recommendedName>
        <fullName evidence="1">Large ribosomal subunit protein uL14</fullName>
    </recommendedName>
    <alternativeName>
        <fullName evidence="2">50S ribosomal protein L14</fullName>
    </alternativeName>
</protein>
<evidence type="ECO:0000255" key="1">
    <source>
        <dbReference type="HAMAP-Rule" id="MF_01367"/>
    </source>
</evidence>
<evidence type="ECO:0000305" key="2"/>
<sequence>MIQQESQLKVADNTGAKKVKCFKVLGGSRRRYATVGDIIVCSVRDVEPDSSIKKGDVVKAVIVRTRRDILRKDGSSLRFDTNSCVIIDEKGNPKGTRIFGPIAREIRDRGFVKISSLAPEVI</sequence>
<keyword id="KW-0687">Ribonucleoprotein</keyword>
<keyword id="KW-0689">Ribosomal protein</keyword>
<keyword id="KW-0694">RNA-binding</keyword>
<keyword id="KW-0699">rRNA-binding</keyword>
<reference key="1">
    <citation type="journal article" date="2006" name="DNA Res.">
        <title>Genome sequence of the cat pathogen, Chlamydophila felis.</title>
        <authorList>
            <person name="Azuma Y."/>
            <person name="Hirakawa H."/>
            <person name="Yamashita A."/>
            <person name="Cai Y."/>
            <person name="Rahman M.A."/>
            <person name="Suzuki H."/>
            <person name="Mitaku S."/>
            <person name="Toh H."/>
            <person name="Goto S."/>
            <person name="Murakami T."/>
            <person name="Sugi K."/>
            <person name="Hayashi H."/>
            <person name="Fukushi H."/>
            <person name="Hattori M."/>
            <person name="Kuhara S."/>
            <person name="Shirai M."/>
        </authorList>
    </citation>
    <scope>NUCLEOTIDE SEQUENCE [LARGE SCALE GENOMIC DNA]</scope>
    <source>
        <strain>Fe/C-56</strain>
    </source>
</reference>
<gene>
    <name evidence="1" type="primary">rplN</name>
    <name type="ordered locus">CF0903</name>
</gene>
<proteinExistence type="inferred from homology"/>